<keyword id="KW-0067">ATP-binding</keyword>
<keyword id="KW-0414">Isoprene biosynthesis</keyword>
<keyword id="KW-0418">Kinase</keyword>
<keyword id="KW-0547">Nucleotide-binding</keyword>
<keyword id="KW-0808">Transferase</keyword>
<reference key="1">
    <citation type="submission" date="2007-06" db="EMBL/GenBank/DDBJ databases">
        <title>Complete sequence of Clostridium beijerinckii NCIMB 8052.</title>
        <authorList>
            <consortium name="US DOE Joint Genome Institute"/>
            <person name="Copeland A."/>
            <person name="Lucas S."/>
            <person name="Lapidus A."/>
            <person name="Barry K."/>
            <person name="Detter J.C."/>
            <person name="Glavina del Rio T."/>
            <person name="Hammon N."/>
            <person name="Israni S."/>
            <person name="Dalin E."/>
            <person name="Tice H."/>
            <person name="Pitluck S."/>
            <person name="Sims D."/>
            <person name="Brettin T."/>
            <person name="Bruce D."/>
            <person name="Tapia R."/>
            <person name="Brainard J."/>
            <person name="Schmutz J."/>
            <person name="Larimer F."/>
            <person name="Land M."/>
            <person name="Hauser L."/>
            <person name="Kyrpides N."/>
            <person name="Mikhailova N."/>
            <person name="Bennet G."/>
            <person name="Cann I."/>
            <person name="Chen J.-S."/>
            <person name="Contreras A.L."/>
            <person name="Jones D."/>
            <person name="Kashket E."/>
            <person name="Mitchell W."/>
            <person name="Stoddard S."/>
            <person name="Schwarz W."/>
            <person name="Qureshi N."/>
            <person name="Young M."/>
            <person name="Shi Z."/>
            <person name="Ezeji T."/>
            <person name="White B."/>
            <person name="Blaschek H."/>
            <person name="Richardson P."/>
        </authorList>
    </citation>
    <scope>NUCLEOTIDE SEQUENCE [LARGE SCALE GENOMIC DNA]</scope>
    <source>
        <strain>ATCC 51743 / NCIMB 8052</strain>
    </source>
</reference>
<evidence type="ECO:0000255" key="1">
    <source>
        <dbReference type="HAMAP-Rule" id="MF_00061"/>
    </source>
</evidence>
<feature type="chain" id="PRO_1000075043" description="4-diphosphocytidyl-2-C-methyl-D-erythritol kinase">
    <location>
        <begin position="1"/>
        <end position="280"/>
    </location>
</feature>
<feature type="active site" evidence="1">
    <location>
        <position position="8"/>
    </location>
</feature>
<feature type="active site" evidence="1">
    <location>
        <position position="133"/>
    </location>
</feature>
<feature type="binding site" evidence="1">
    <location>
        <begin position="91"/>
        <end position="101"/>
    </location>
    <ligand>
        <name>ATP</name>
        <dbReference type="ChEBI" id="CHEBI:30616"/>
    </ligand>
</feature>
<dbReference type="EC" id="2.7.1.148" evidence="1"/>
<dbReference type="EMBL" id="CP000721">
    <property type="protein sequence ID" value="ABR32582.1"/>
    <property type="molecule type" value="Genomic_DNA"/>
</dbReference>
<dbReference type="RefSeq" id="WP_011967743.1">
    <property type="nucleotide sequence ID" value="NC_009617.1"/>
</dbReference>
<dbReference type="SMR" id="A6LQF2"/>
<dbReference type="KEGG" id="cbe:Cbei_0394"/>
<dbReference type="eggNOG" id="COG1947">
    <property type="taxonomic scope" value="Bacteria"/>
</dbReference>
<dbReference type="HOGENOM" id="CLU_053057_1_1_9"/>
<dbReference type="UniPathway" id="UPA00056">
    <property type="reaction ID" value="UER00094"/>
</dbReference>
<dbReference type="Proteomes" id="UP000000565">
    <property type="component" value="Chromosome"/>
</dbReference>
<dbReference type="GO" id="GO:0050515">
    <property type="term" value="F:4-(cytidine 5'-diphospho)-2-C-methyl-D-erythritol kinase activity"/>
    <property type="evidence" value="ECO:0007669"/>
    <property type="project" value="UniProtKB-UniRule"/>
</dbReference>
<dbReference type="GO" id="GO:0005524">
    <property type="term" value="F:ATP binding"/>
    <property type="evidence" value="ECO:0007669"/>
    <property type="project" value="UniProtKB-UniRule"/>
</dbReference>
<dbReference type="GO" id="GO:0019288">
    <property type="term" value="P:isopentenyl diphosphate biosynthetic process, methylerythritol 4-phosphate pathway"/>
    <property type="evidence" value="ECO:0007669"/>
    <property type="project" value="UniProtKB-UniRule"/>
</dbReference>
<dbReference type="GO" id="GO:0016114">
    <property type="term" value="P:terpenoid biosynthetic process"/>
    <property type="evidence" value="ECO:0007669"/>
    <property type="project" value="InterPro"/>
</dbReference>
<dbReference type="FunFam" id="3.30.230.10:FF:000029">
    <property type="entry name" value="4-diphosphocytidyl-2-C-methyl-D-erythritol kinase"/>
    <property type="match status" value="1"/>
</dbReference>
<dbReference type="Gene3D" id="3.30.230.10">
    <property type="match status" value="1"/>
</dbReference>
<dbReference type="Gene3D" id="3.30.70.890">
    <property type="entry name" value="GHMP kinase, C-terminal domain"/>
    <property type="match status" value="1"/>
</dbReference>
<dbReference type="HAMAP" id="MF_00061">
    <property type="entry name" value="IspE"/>
    <property type="match status" value="1"/>
</dbReference>
<dbReference type="InterPro" id="IPR013750">
    <property type="entry name" value="GHMP_kinase_C_dom"/>
</dbReference>
<dbReference type="InterPro" id="IPR036554">
    <property type="entry name" value="GHMP_kinase_C_sf"/>
</dbReference>
<dbReference type="InterPro" id="IPR006204">
    <property type="entry name" value="GHMP_kinase_N_dom"/>
</dbReference>
<dbReference type="InterPro" id="IPR004424">
    <property type="entry name" value="IspE"/>
</dbReference>
<dbReference type="InterPro" id="IPR020568">
    <property type="entry name" value="Ribosomal_Su5_D2-typ_SF"/>
</dbReference>
<dbReference type="InterPro" id="IPR014721">
    <property type="entry name" value="Ribsml_uS5_D2-typ_fold_subgr"/>
</dbReference>
<dbReference type="NCBIfam" id="TIGR00154">
    <property type="entry name" value="ispE"/>
    <property type="match status" value="1"/>
</dbReference>
<dbReference type="PANTHER" id="PTHR43527">
    <property type="entry name" value="4-DIPHOSPHOCYTIDYL-2-C-METHYL-D-ERYTHRITOL KINASE, CHLOROPLASTIC"/>
    <property type="match status" value="1"/>
</dbReference>
<dbReference type="PANTHER" id="PTHR43527:SF2">
    <property type="entry name" value="4-DIPHOSPHOCYTIDYL-2-C-METHYL-D-ERYTHRITOL KINASE, CHLOROPLASTIC"/>
    <property type="match status" value="1"/>
</dbReference>
<dbReference type="Pfam" id="PF08544">
    <property type="entry name" value="GHMP_kinases_C"/>
    <property type="match status" value="1"/>
</dbReference>
<dbReference type="Pfam" id="PF00288">
    <property type="entry name" value="GHMP_kinases_N"/>
    <property type="match status" value="1"/>
</dbReference>
<dbReference type="PIRSF" id="PIRSF010376">
    <property type="entry name" value="IspE"/>
    <property type="match status" value="1"/>
</dbReference>
<dbReference type="SUPFAM" id="SSF55060">
    <property type="entry name" value="GHMP Kinase, C-terminal domain"/>
    <property type="match status" value="1"/>
</dbReference>
<dbReference type="SUPFAM" id="SSF54211">
    <property type="entry name" value="Ribosomal protein S5 domain 2-like"/>
    <property type="match status" value="1"/>
</dbReference>
<gene>
    <name evidence="1" type="primary">ispE</name>
    <name type="ordered locus">Cbei_0394</name>
</gene>
<protein>
    <recommendedName>
        <fullName evidence="1">4-diphosphocytidyl-2-C-methyl-D-erythritol kinase</fullName>
        <shortName evidence="1">CMK</shortName>
        <ecNumber evidence="1">2.7.1.148</ecNumber>
    </recommendedName>
    <alternativeName>
        <fullName evidence="1">4-(cytidine-5'-diphospho)-2-C-methyl-D-erythritol kinase</fullName>
    </alternativeName>
</protein>
<comment type="function">
    <text evidence="1">Catalyzes the phosphorylation of the position 2 hydroxy group of 4-diphosphocytidyl-2C-methyl-D-erythritol.</text>
</comment>
<comment type="catalytic activity">
    <reaction evidence="1">
        <text>4-CDP-2-C-methyl-D-erythritol + ATP = 4-CDP-2-C-methyl-D-erythritol 2-phosphate + ADP + H(+)</text>
        <dbReference type="Rhea" id="RHEA:18437"/>
        <dbReference type="ChEBI" id="CHEBI:15378"/>
        <dbReference type="ChEBI" id="CHEBI:30616"/>
        <dbReference type="ChEBI" id="CHEBI:57823"/>
        <dbReference type="ChEBI" id="CHEBI:57919"/>
        <dbReference type="ChEBI" id="CHEBI:456216"/>
        <dbReference type="EC" id="2.7.1.148"/>
    </reaction>
</comment>
<comment type="pathway">
    <text evidence="1">Isoprenoid biosynthesis; isopentenyl diphosphate biosynthesis via DXP pathway; isopentenyl diphosphate from 1-deoxy-D-xylulose 5-phosphate: step 3/6.</text>
</comment>
<comment type="similarity">
    <text evidence="1">Belongs to the GHMP kinase family. IspE subfamily.</text>
</comment>
<organism>
    <name type="scientific">Clostridium beijerinckii (strain ATCC 51743 / NCIMB 8052)</name>
    <name type="common">Clostridium acetobutylicum</name>
    <dbReference type="NCBI Taxonomy" id="290402"/>
    <lineage>
        <taxon>Bacteria</taxon>
        <taxon>Bacillati</taxon>
        <taxon>Bacillota</taxon>
        <taxon>Clostridia</taxon>
        <taxon>Eubacteriales</taxon>
        <taxon>Clostridiaceae</taxon>
        <taxon>Clostridium</taxon>
    </lineage>
</organism>
<name>ISPE_CLOB8</name>
<sequence length="280" mass="31414">MKIKAYAKINIALDIVGKREDGYHILKMIMQTIDLYDIIEIEKTESEIRLNCNKHYVPTDERNLAYKAAKIFKETYSISQGVDIKLTKNIPVSAGLAGGSTDAAGVLKLMNKMFNVNASDEELKSIGLRLGADVPYCIKGGTALCEGIGEKITQLKSFKDKIIVLVKPPFGVSTKEVYKCFDLSKVVFHPKIDSLIENMNNDDVYFVANNMKNLLENVTLRKHRVITNIKEEMKSIGSIGTMMSGSGPTVFALFDDMLKAQLCYDEMKKKYKDVFITRTI</sequence>
<proteinExistence type="inferred from homology"/>
<accession>A6LQF2</accession>